<keyword id="KW-1185">Reference proteome</keyword>
<keyword id="KW-0687">Ribonucleoprotein</keyword>
<keyword id="KW-0689">Ribosomal protein</keyword>
<keyword id="KW-0694">RNA-binding</keyword>
<keyword id="KW-0699">rRNA-binding</keyword>
<protein>
    <recommendedName>
        <fullName evidence="1">Small ribosomal subunit protein uS5</fullName>
    </recommendedName>
    <alternativeName>
        <fullName evidence="2">30S ribosomal protein S5</fullName>
    </alternativeName>
</protein>
<proteinExistence type="inferred from homology"/>
<gene>
    <name evidence="1" type="primary">rpsE</name>
    <name type="ordered locus">CHY_2292</name>
</gene>
<dbReference type="EMBL" id="CP000141">
    <property type="protein sequence ID" value="ABB15326.1"/>
    <property type="molecule type" value="Genomic_DNA"/>
</dbReference>
<dbReference type="RefSeq" id="WP_011345174.1">
    <property type="nucleotide sequence ID" value="NC_007503.1"/>
</dbReference>
<dbReference type="SMR" id="Q3A9T3"/>
<dbReference type="FunCoup" id="Q3A9T3">
    <property type="interactions" value="486"/>
</dbReference>
<dbReference type="STRING" id="246194.CHY_2292"/>
<dbReference type="KEGG" id="chy:CHY_2292"/>
<dbReference type="eggNOG" id="COG0098">
    <property type="taxonomic scope" value="Bacteria"/>
</dbReference>
<dbReference type="HOGENOM" id="CLU_065898_2_2_9"/>
<dbReference type="InParanoid" id="Q3A9T3"/>
<dbReference type="OrthoDB" id="9809045at2"/>
<dbReference type="Proteomes" id="UP000002706">
    <property type="component" value="Chromosome"/>
</dbReference>
<dbReference type="GO" id="GO:0015935">
    <property type="term" value="C:small ribosomal subunit"/>
    <property type="evidence" value="ECO:0007669"/>
    <property type="project" value="InterPro"/>
</dbReference>
<dbReference type="GO" id="GO:0019843">
    <property type="term" value="F:rRNA binding"/>
    <property type="evidence" value="ECO:0007669"/>
    <property type="project" value="UniProtKB-UniRule"/>
</dbReference>
<dbReference type="GO" id="GO:0003735">
    <property type="term" value="F:structural constituent of ribosome"/>
    <property type="evidence" value="ECO:0007669"/>
    <property type="project" value="InterPro"/>
</dbReference>
<dbReference type="GO" id="GO:0006412">
    <property type="term" value="P:translation"/>
    <property type="evidence" value="ECO:0007669"/>
    <property type="project" value="UniProtKB-UniRule"/>
</dbReference>
<dbReference type="FunFam" id="3.30.160.20:FF:000001">
    <property type="entry name" value="30S ribosomal protein S5"/>
    <property type="match status" value="1"/>
</dbReference>
<dbReference type="FunFam" id="3.30.230.10:FF:000002">
    <property type="entry name" value="30S ribosomal protein S5"/>
    <property type="match status" value="1"/>
</dbReference>
<dbReference type="Gene3D" id="3.30.160.20">
    <property type="match status" value="1"/>
</dbReference>
<dbReference type="Gene3D" id="3.30.230.10">
    <property type="match status" value="1"/>
</dbReference>
<dbReference type="HAMAP" id="MF_01307_B">
    <property type="entry name" value="Ribosomal_uS5_B"/>
    <property type="match status" value="1"/>
</dbReference>
<dbReference type="InterPro" id="IPR020568">
    <property type="entry name" value="Ribosomal_Su5_D2-typ_SF"/>
</dbReference>
<dbReference type="InterPro" id="IPR000851">
    <property type="entry name" value="Ribosomal_uS5"/>
</dbReference>
<dbReference type="InterPro" id="IPR005712">
    <property type="entry name" value="Ribosomal_uS5_bac-type"/>
</dbReference>
<dbReference type="InterPro" id="IPR005324">
    <property type="entry name" value="Ribosomal_uS5_C"/>
</dbReference>
<dbReference type="InterPro" id="IPR013810">
    <property type="entry name" value="Ribosomal_uS5_N"/>
</dbReference>
<dbReference type="InterPro" id="IPR018192">
    <property type="entry name" value="Ribosomal_uS5_N_CS"/>
</dbReference>
<dbReference type="InterPro" id="IPR014721">
    <property type="entry name" value="Ribsml_uS5_D2-typ_fold_subgr"/>
</dbReference>
<dbReference type="NCBIfam" id="TIGR01021">
    <property type="entry name" value="rpsE_bact"/>
    <property type="match status" value="1"/>
</dbReference>
<dbReference type="PANTHER" id="PTHR48277">
    <property type="entry name" value="MITOCHONDRIAL RIBOSOMAL PROTEIN S5"/>
    <property type="match status" value="1"/>
</dbReference>
<dbReference type="PANTHER" id="PTHR48277:SF1">
    <property type="entry name" value="MITOCHONDRIAL RIBOSOMAL PROTEIN S5"/>
    <property type="match status" value="1"/>
</dbReference>
<dbReference type="Pfam" id="PF00333">
    <property type="entry name" value="Ribosomal_S5"/>
    <property type="match status" value="1"/>
</dbReference>
<dbReference type="Pfam" id="PF03719">
    <property type="entry name" value="Ribosomal_S5_C"/>
    <property type="match status" value="1"/>
</dbReference>
<dbReference type="SUPFAM" id="SSF54768">
    <property type="entry name" value="dsRNA-binding domain-like"/>
    <property type="match status" value="1"/>
</dbReference>
<dbReference type="SUPFAM" id="SSF54211">
    <property type="entry name" value="Ribosomal protein S5 domain 2-like"/>
    <property type="match status" value="1"/>
</dbReference>
<dbReference type="PROSITE" id="PS00585">
    <property type="entry name" value="RIBOSOMAL_S5"/>
    <property type="match status" value="1"/>
</dbReference>
<dbReference type="PROSITE" id="PS50881">
    <property type="entry name" value="S5_DSRBD"/>
    <property type="match status" value="1"/>
</dbReference>
<reference key="1">
    <citation type="journal article" date="2005" name="PLoS Genet.">
        <title>Life in hot carbon monoxide: the complete genome sequence of Carboxydothermus hydrogenoformans Z-2901.</title>
        <authorList>
            <person name="Wu M."/>
            <person name="Ren Q."/>
            <person name="Durkin A.S."/>
            <person name="Daugherty S.C."/>
            <person name="Brinkac L.M."/>
            <person name="Dodson R.J."/>
            <person name="Madupu R."/>
            <person name="Sullivan S.A."/>
            <person name="Kolonay J.F."/>
            <person name="Nelson W.C."/>
            <person name="Tallon L.J."/>
            <person name="Jones K.M."/>
            <person name="Ulrich L.E."/>
            <person name="Gonzalez J.M."/>
            <person name="Zhulin I.B."/>
            <person name="Robb F.T."/>
            <person name="Eisen J.A."/>
        </authorList>
    </citation>
    <scope>NUCLEOTIDE SEQUENCE [LARGE SCALE GENOMIC DNA]</scope>
    <source>
        <strain>ATCC BAA-161 / DSM 6008 / Z-2901</strain>
    </source>
</reference>
<evidence type="ECO:0000255" key="1">
    <source>
        <dbReference type="HAMAP-Rule" id="MF_01307"/>
    </source>
</evidence>
<evidence type="ECO:0000305" key="2"/>
<organism>
    <name type="scientific">Carboxydothermus hydrogenoformans (strain ATCC BAA-161 / DSM 6008 / Z-2901)</name>
    <dbReference type="NCBI Taxonomy" id="246194"/>
    <lineage>
        <taxon>Bacteria</taxon>
        <taxon>Bacillati</taxon>
        <taxon>Bacillota</taxon>
        <taxon>Clostridia</taxon>
        <taxon>Thermoanaerobacterales</taxon>
        <taxon>Thermoanaerobacteraceae</taxon>
        <taxon>Carboxydothermus</taxon>
    </lineage>
</organism>
<name>RS5_CARHZ</name>
<comment type="function">
    <text evidence="1">With S4 and S12 plays an important role in translational accuracy.</text>
</comment>
<comment type="function">
    <text evidence="1">Located at the back of the 30S subunit body where it stabilizes the conformation of the head with respect to the body.</text>
</comment>
<comment type="subunit">
    <text evidence="1">Part of the 30S ribosomal subunit. Contacts proteins S4 and S8.</text>
</comment>
<comment type="domain">
    <text>The N-terminal domain interacts with the head of the 30S subunit; the C-terminal domain interacts with the body and contacts protein S4. The interaction surface between S4 and S5 is involved in control of translational fidelity.</text>
</comment>
<comment type="similarity">
    <text evidence="1">Belongs to the universal ribosomal protein uS5 family.</text>
</comment>
<accession>Q3A9T3</accession>
<sequence>MARIDASQLELSEKVIAINRTAKVVKGGRRFSFSALVVVGDQKGHVGVGLGKAPEVPDAIRKGIEDAKKNLIKVPIVNTTIPHEIIGEAGAGKVLLKPAAPGTGVIAGSAVRAILEMAGVRDILTKSLGSNNPHNMAHATIEALKSLKTVEMVAKLRGKTPAEILKG</sequence>
<feature type="chain" id="PRO_0000230337" description="Small ribosomal subunit protein uS5">
    <location>
        <begin position="1"/>
        <end position="167"/>
    </location>
</feature>
<feature type="domain" description="S5 DRBM" evidence="1">
    <location>
        <begin position="11"/>
        <end position="74"/>
    </location>
</feature>